<keyword id="KW-0030">Aminoacyl-tRNA synthetase</keyword>
<keyword id="KW-0067">ATP-binding</keyword>
<keyword id="KW-0963">Cytoplasm</keyword>
<keyword id="KW-0436">Ligase</keyword>
<keyword id="KW-0479">Metal-binding</keyword>
<keyword id="KW-0547">Nucleotide-binding</keyword>
<keyword id="KW-0648">Protein biosynthesis</keyword>
<keyword id="KW-1185">Reference proteome</keyword>
<keyword id="KW-0694">RNA-binding</keyword>
<keyword id="KW-0820">tRNA-binding</keyword>
<keyword id="KW-0862">Zinc</keyword>
<accession>Q896F2</accession>
<feature type="chain" id="PRO_0000075095" description="Alanine--tRNA ligase">
    <location>
        <begin position="1"/>
        <end position="879"/>
    </location>
</feature>
<feature type="binding site" evidence="1">
    <location>
        <position position="566"/>
    </location>
    <ligand>
        <name>Zn(2+)</name>
        <dbReference type="ChEBI" id="CHEBI:29105"/>
    </ligand>
</feature>
<feature type="binding site" evidence="1">
    <location>
        <position position="570"/>
    </location>
    <ligand>
        <name>Zn(2+)</name>
        <dbReference type="ChEBI" id="CHEBI:29105"/>
    </ligand>
</feature>
<feature type="binding site" evidence="1">
    <location>
        <position position="668"/>
    </location>
    <ligand>
        <name>Zn(2+)</name>
        <dbReference type="ChEBI" id="CHEBI:29105"/>
    </ligand>
</feature>
<feature type="binding site" evidence="1">
    <location>
        <position position="672"/>
    </location>
    <ligand>
        <name>Zn(2+)</name>
        <dbReference type="ChEBI" id="CHEBI:29105"/>
    </ligand>
</feature>
<protein>
    <recommendedName>
        <fullName evidence="1">Alanine--tRNA ligase</fullName>
        <ecNumber evidence="1">6.1.1.7</ecNumber>
    </recommendedName>
    <alternativeName>
        <fullName evidence="1">Alanyl-tRNA synthetase</fullName>
        <shortName evidence="1">AlaRS</shortName>
    </alternativeName>
</protein>
<gene>
    <name evidence="1" type="primary">alaS</name>
    <name type="ordered locus">CTC_01055</name>
</gene>
<organism>
    <name type="scientific">Clostridium tetani (strain Massachusetts / E88)</name>
    <dbReference type="NCBI Taxonomy" id="212717"/>
    <lineage>
        <taxon>Bacteria</taxon>
        <taxon>Bacillati</taxon>
        <taxon>Bacillota</taxon>
        <taxon>Clostridia</taxon>
        <taxon>Eubacteriales</taxon>
        <taxon>Clostridiaceae</taxon>
        <taxon>Clostridium</taxon>
    </lineage>
</organism>
<evidence type="ECO:0000255" key="1">
    <source>
        <dbReference type="HAMAP-Rule" id="MF_00036"/>
    </source>
</evidence>
<dbReference type="EC" id="6.1.1.7" evidence="1"/>
<dbReference type="EMBL" id="AE015927">
    <property type="protein sequence ID" value="AAO35638.1"/>
    <property type="molecule type" value="Genomic_DNA"/>
</dbReference>
<dbReference type="RefSeq" id="WP_011099300.1">
    <property type="nucleotide sequence ID" value="NC_004557.1"/>
</dbReference>
<dbReference type="SMR" id="Q896F2"/>
<dbReference type="STRING" id="212717.CTC_01055"/>
<dbReference type="GeneID" id="24255163"/>
<dbReference type="KEGG" id="ctc:CTC_01055"/>
<dbReference type="HOGENOM" id="CLU_004485_1_1_9"/>
<dbReference type="OrthoDB" id="9803884at2"/>
<dbReference type="Proteomes" id="UP000001412">
    <property type="component" value="Chromosome"/>
</dbReference>
<dbReference type="GO" id="GO:0005829">
    <property type="term" value="C:cytosol"/>
    <property type="evidence" value="ECO:0007669"/>
    <property type="project" value="TreeGrafter"/>
</dbReference>
<dbReference type="GO" id="GO:0004813">
    <property type="term" value="F:alanine-tRNA ligase activity"/>
    <property type="evidence" value="ECO:0007669"/>
    <property type="project" value="UniProtKB-UniRule"/>
</dbReference>
<dbReference type="GO" id="GO:0002161">
    <property type="term" value="F:aminoacyl-tRNA deacylase activity"/>
    <property type="evidence" value="ECO:0007669"/>
    <property type="project" value="TreeGrafter"/>
</dbReference>
<dbReference type="GO" id="GO:0005524">
    <property type="term" value="F:ATP binding"/>
    <property type="evidence" value="ECO:0007669"/>
    <property type="project" value="UniProtKB-UniRule"/>
</dbReference>
<dbReference type="GO" id="GO:0140096">
    <property type="term" value="F:catalytic activity, acting on a protein"/>
    <property type="evidence" value="ECO:0007669"/>
    <property type="project" value="UniProtKB-ARBA"/>
</dbReference>
<dbReference type="GO" id="GO:0016740">
    <property type="term" value="F:transferase activity"/>
    <property type="evidence" value="ECO:0007669"/>
    <property type="project" value="UniProtKB-ARBA"/>
</dbReference>
<dbReference type="GO" id="GO:0000049">
    <property type="term" value="F:tRNA binding"/>
    <property type="evidence" value="ECO:0007669"/>
    <property type="project" value="UniProtKB-KW"/>
</dbReference>
<dbReference type="GO" id="GO:0008270">
    <property type="term" value="F:zinc ion binding"/>
    <property type="evidence" value="ECO:0007669"/>
    <property type="project" value="UniProtKB-UniRule"/>
</dbReference>
<dbReference type="GO" id="GO:0006419">
    <property type="term" value="P:alanyl-tRNA aminoacylation"/>
    <property type="evidence" value="ECO:0007669"/>
    <property type="project" value="UniProtKB-UniRule"/>
</dbReference>
<dbReference type="CDD" id="cd00673">
    <property type="entry name" value="AlaRS_core"/>
    <property type="match status" value="1"/>
</dbReference>
<dbReference type="FunFam" id="2.40.30.130:FF:000001">
    <property type="entry name" value="Alanine--tRNA ligase"/>
    <property type="match status" value="1"/>
</dbReference>
<dbReference type="FunFam" id="3.10.310.40:FF:000001">
    <property type="entry name" value="Alanine--tRNA ligase"/>
    <property type="match status" value="1"/>
</dbReference>
<dbReference type="FunFam" id="3.30.54.20:FF:000001">
    <property type="entry name" value="Alanine--tRNA ligase"/>
    <property type="match status" value="1"/>
</dbReference>
<dbReference type="FunFam" id="3.30.930.10:FF:000004">
    <property type="entry name" value="Alanine--tRNA ligase"/>
    <property type="match status" value="1"/>
</dbReference>
<dbReference type="FunFam" id="3.30.980.10:FF:000004">
    <property type="entry name" value="Alanine--tRNA ligase, cytoplasmic"/>
    <property type="match status" value="1"/>
</dbReference>
<dbReference type="Gene3D" id="2.40.30.130">
    <property type="match status" value="1"/>
</dbReference>
<dbReference type="Gene3D" id="3.10.310.40">
    <property type="match status" value="1"/>
</dbReference>
<dbReference type="Gene3D" id="3.30.54.20">
    <property type="match status" value="1"/>
</dbReference>
<dbReference type="Gene3D" id="6.10.250.550">
    <property type="match status" value="1"/>
</dbReference>
<dbReference type="Gene3D" id="3.30.930.10">
    <property type="entry name" value="Bira Bifunctional Protein, Domain 2"/>
    <property type="match status" value="1"/>
</dbReference>
<dbReference type="Gene3D" id="3.30.980.10">
    <property type="entry name" value="Threonyl-trna Synthetase, Chain A, domain 2"/>
    <property type="match status" value="1"/>
</dbReference>
<dbReference type="HAMAP" id="MF_00036_B">
    <property type="entry name" value="Ala_tRNA_synth_B"/>
    <property type="match status" value="1"/>
</dbReference>
<dbReference type="InterPro" id="IPR045864">
    <property type="entry name" value="aa-tRNA-synth_II/BPL/LPL"/>
</dbReference>
<dbReference type="InterPro" id="IPR002318">
    <property type="entry name" value="Ala-tRNA-lgiase_IIc"/>
</dbReference>
<dbReference type="InterPro" id="IPR018162">
    <property type="entry name" value="Ala-tRNA-ligase_IIc_anticod-bd"/>
</dbReference>
<dbReference type="InterPro" id="IPR018165">
    <property type="entry name" value="Ala-tRNA-synth_IIc_core"/>
</dbReference>
<dbReference type="InterPro" id="IPR018164">
    <property type="entry name" value="Ala-tRNA-synth_IIc_N"/>
</dbReference>
<dbReference type="InterPro" id="IPR050058">
    <property type="entry name" value="Ala-tRNA_ligase"/>
</dbReference>
<dbReference type="InterPro" id="IPR023033">
    <property type="entry name" value="Ala_tRNA_ligase_euk/bac"/>
</dbReference>
<dbReference type="InterPro" id="IPR003156">
    <property type="entry name" value="DHHA1_dom"/>
</dbReference>
<dbReference type="InterPro" id="IPR018163">
    <property type="entry name" value="Thr/Ala-tRNA-synth_IIc_edit"/>
</dbReference>
<dbReference type="InterPro" id="IPR009000">
    <property type="entry name" value="Transl_B-barrel_sf"/>
</dbReference>
<dbReference type="InterPro" id="IPR012947">
    <property type="entry name" value="tRNA_SAD"/>
</dbReference>
<dbReference type="NCBIfam" id="TIGR00344">
    <property type="entry name" value="alaS"/>
    <property type="match status" value="1"/>
</dbReference>
<dbReference type="PANTHER" id="PTHR11777:SF9">
    <property type="entry name" value="ALANINE--TRNA LIGASE, CYTOPLASMIC"/>
    <property type="match status" value="1"/>
</dbReference>
<dbReference type="PANTHER" id="PTHR11777">
    <property type="entry name" value="ALANYL-TRNA SYNTHETASE"/>
    <property type="match status" value="1"/>
</dbReference>
<dbReference type="Pfam" id="PF02272">
    <property type="entry name" value="DHHA1"/>
    <property type="match status" value="1"/>
</dbReference>
<dbReference type="Pfam" id="PF01411">
    <property type="entry name" value="tRNA-synt_2c"/>
    <property type="match status" value="1"/>
</dbReference>
<dbReference type="Pfam" id="PF07973">
    <property type="entry name" value="tRNA_SAD"/>
    <property type="match status" value="1"/>
</dbReference>
<dbReference type="PRINTS" id="PR00980">
    <property type="entry name" value="TRNASYNTHALA"/>
</dbReference>
<dbReference type="SMART" id="SM00863">
    <property type="entry name" value="tRNA_SAD"/>
    <property type="match status" value="1"/>
</dbReference>
<dbReference type="SUPFAM" id="SSF55681">
    <property type="entry name" value="Class II aaRS and biotin synthetases"/>
    <property type="match status" value="1"/>
</dbReference>
<dbReference type="SUPFAM" id="SSF101353">
    <property type="entry name" value="Putative anticodon-binding domain of alanyl-tRNA synthetase (AlaRS)"/>
    <property type="match status" value="1"/>
</dbReference>
<dbReference type="SUPFAM" id="SSF55186">
    <property type="entry name" value="ThrRS/AlaRS common domain"/>
    <property type="match status" value="1"/>
</dbReference>
<dbReference type="SUPFAM" id="SSF50447">
    <property type="entry name" value="Translation proteins"/>
    <property type="match status" value="1"/>
</dbReference>
<dbReference type="PROSITE" id="PS50860">
    <property type="entry name" value="AA_TRNA_LIGASE_II_ALA"/>
    <property type="match status" value="1"/>
</dbReference>
<comment type="function">
    <text evidence="1">Catalyzes the attachment of alanine to tRNA(Ala) in a two-step reaction: alanine is first activated by ATP to form Ala-AMP and then transferred to the acceptor end of tRNA(Ala). Also edits incorrectly charged Ser-tRNA(Ala) and Gly-tRNA(Ala) via its editing domain.</text>
</comment>
<comment type="catalytic activity">
    <reaction evidence="1">
        <text>tRNA(Ala) + L-alanine + ATP = L-alanyl-tRNA(Ala) + AMP + diphosphate</text>
        <dbReference type="Rhea" id="RHEA:12540"/>
        <dbReference type="Rhea" id="RHEA-COMP:9657"/>
        <dbReference type="Rhea" id="RHEA-COMP:9923"/>
        <dbReference type="ChEBI" id="CHEBI:30616"/>
        <dbReference type="ChEBI" id="CHEBI:33019"/>
        <dbReference type="ChEBI" id="CHEBI:57972"/>
        <dbReference type="ChEBI" id="CHEBI:78442"/>
        <dbReference type="ChEBI" id="CHEBI:78497"/>
        <dbReference type="ChEBI" id="CHEBI:456215"/>
        <dbReference type="EC" id="6.1.1.7"/>
    </reaction>
</comment>
<comment type="cofactor">
    <cofactor evidence="1">
        <name>Zn(2+)</name>
        <dbReference type="ChEBI" id="CHEBI:29105"/>
    </cofactor>
    <text evidence="1">Binds 1 zinc ion per subunit.</text>
</comment>
<comment type="subcellular location">
    <subcellularLocation>
        <location evidence="1">Cytoplasm</location>
    </subcellularLocation>
</comment>
<comment type="domain">
    <text evidence="1">Consists of three domains; the N-terminal catalytic domain, the editing domain and the C-terminal C-Ala domain. The editing domain removes incorrectly charged amino acids, while the C-Ala domain, along with tRNA(Ala), serves as a bridge to cooperatively bring together the editing and aminoacylation centers thus stimulating deacylation of misacylated tRNAs.</text>
</comment>
<comment type="similarity">
    <text evidence="1">Belongs to the class-II aminoacyl-tRNA synthetase family.</text>
</comment>
<sequence>MKNMGLNEIREAYLNFFEGKGHLRMESFSLVPKNDKSLLLINAGMAPLKPYFTGVQTPPKSRVTTCQKCIRTGDIENVGKTSRHGTFFEMLGNFSFGDYFKCEVIPWAWEFVTKSLNIPKDKLYVTIYLDDDEAYDIWTKSTDIDPSRIFRLGKEDNFWEIGQGPCGPCSEIHYQREGEKINSVEEFIKKSDDDEVIEFWNLVFTQFDKDENENYNRLAHPNIDTGMGLERMATIMQGVNSIFEVDTIKAVLDEISEIANIKYGENKEKDISLRVITDHVRSVTFMISDGILPSNEGRGYVLRRLLRRASRHGKLLGIKGNFLYKVCKVVIENSHKAYKELKEKEEYIKKIIKLEEERFAETIDGGIQILNEYVDELINKGEKVLPGDKAFKLYDTYGFPIELTKEILEEKSIDIDEGGFTKEMEAQKQRARAAREETNYMGSEDTIINKLPIELQTEFLGYSELSVEAKIIAIIKGEELVEELKQGDKGIIIVDKTPFYSEKGGQIGDTGILAGKNVKVKIQDCRNNISGKILHFVEILEGSIKLQDTVNLTVDRLRRDAIRKNHSATHLLHEALKKIVGAHIEQAGSFVDEHRLRFDFNHFSSLTKEELKNVEKLVNKKIMEVIPVNTKVMNIEEAKESGAVALFDEKYDEKVRVVSLGDFSKELCGGTHVSNSGEIGLFKIISETGVAAGVRRIEGVTGFNALKYIEEKEALLEGLCEVLKCSNKDIINKATSQIEEIKNKEKEINNLKSKLASGSQEDILKNIKEVKGIKLVSGVLKDIDGGALRDLADKLRDKIQEGLVVLASVGEGKIQFVAMATKEAVAKGAHCGKIIKEVASIAGGGGGGRPDMAQAGGKNPEKAEEAIAKVEDILSSLVK</sequence>
<reference key="1">
    <citation type="journal article" date="2003" name="Proc. Natl. Acad. Sci. U.S.A.">
        <title>The genome sequence of Clostridium tetani, the causative agent of tetanus disease.</title>
        <authorList>
            <person name="Brueggemann H."/>
            <person name="Baeumer S."/>
            <person name="Fricke W.F."/>
            <person name="Wiezer A."/>
            <person name="Liesegang H."/>
            <person name="Decker I."/>
            <person name="Herzberg C."/>
            <person name="Martinez-Arias R."/>
            <person name="Merkl R."/>
            <person name="Henne A."/>
            <person name="Gottschalk G."/>
        </authorList>
    </citation>
    <scope>NUCLEOTIDE SEQUENCE [LARGE SCALE GENOMIC DNA]</scope>
    <source>
        <strain>Massachusetts / E88</strain>
    </source>
</reference>
<name>SYA_CLOTE</name>
<proteinExistence type="inferred from homology"/>